<comment type="function">
    <text evidence="3">Catalyzes the oxidative phosphorylation of glyceraldehyde 3-phosphate (G3P) to 1,3-bisphosphoglycerate (BPG) using the cofactor NAD. The first reaction step involves the formation of a hemiacetal intermediate between G3P and a cysteine residue, and this hemiacetal intermediate is then oxidized to a thioester, with concomitant reduction of NAD to NADH. The reduced NADH is then exchanged with the second NAD, and the thioester is attacked by a nucleophilic inorganic phosphate to produce BPG.</text>
</comment>
<comment type="catalytic activity">
    <reaction evidence="3">
        <text>D-glyceraldehyde 3-phosphate + phosphate + NAD(+) = (2R)-3-phospho-glyceroyl phosphate + NADH + H(+)</text>
        <dbReference type="Rhea" id="RHEA:10300"/>
        <dbReference type="ChEBI" id="CHEBI:15378"/>
        <dbReference type="ChEBI" id="CHEBI:43474"/>
        <dbReference type="ChEBI" id="CHEBI:57540"/>
        <dbReference type="ChEBI" id="CHEBI:57604"/>
        <dbReference type="ChEBI" id="CHEBI:57945"/>
        <dbReference type="ChEBI" id="CHEBI:59776"/>
        <dbReference type="EC" id="1.2.1.12"/>
    </reaction>
</comment>
<comment type="pathway">
    <text evidence="5">Carbohydrate degradation; glycolysis; pyruvate from D-glyceraldehyde 3-phosphate: step 1/5.</text>
</comment>
<comment type="subunit">
    <text evidence="2">Homotetramer.</text>
</comment>
<comment type="subcellular location">
    <subcellularLocation>
        <location evidence="5">Cytoplasm</location>
    </subcellularLocation>
</comment>
<comment type="similarity">
    <text evidence="5">Belongs to the glyceraldehyde-3-phosphate dehydrogenase family.</text>
</comment>
<proteinExistence type="evidence at protein level"/>
<name>G3P_MYCS2</name>
<dbReference type="EC" id="1.2.1.12" evidence="3"/>
<dbReference type="EMBL" id="CP000480">
    <property type="protein sequence ID" value="ABK69982.1"/>
    <property type="molecule type" value="Genomic_DNA"/>
</dbReference>
<dbReference type="EMBL" id="CP001663">
    <property type="protein sequence ID" value="AFP39470.1"/>
    <property type="molecule type" value="Genomic_DNA"/>
</dbReference>
<dbReference type="RefSeq" id="WP_003894472.1">
    <property type="nucleotide sequence ID" value="NZ_SIJM01000002.1"/>
</dbReference>
<dbReference type="RefSeq" id="YP_887400.1">
    <property type="nucleotide sequence ID" value="NC_008596.1"/>
</dbReference>
<dbReference type="SMR" id="A0QWW2"/>
<dbReference type="STRING" id="246196.MSMEG_3084"/>
<dbReference type="PaxDb" id="246196-MSMEI_3006"/>
<dbReference type="GeneID" id="93457860"/>
<dbReference type="KEGG" id="msb:LJ00_15345"/>
<dbReference type="KEGG" id="msg:MSMEI_3006"/>
<dbReference type="KEGG" id="msm:MSMEG_3084"/>
<dbReference type="PATRIC" id="fig|246196.19.peg.3045"/>
<dbReference type="eggNOG" id="COG0057">
    <property type="taxonomic scope" value="Bacteria"/>
</dbReference>
<dbReference type="OrthoDB" id="9803304at2"/>
<dbReference type="UniPathway" id="UPA00109">
    <property type="reaction ID" value="UER00184"/>
</dbReference>
<dbReference type="Proteomes" id="UP000000757">
    <property type="component" value="Chromosome"/>
</dbReference>
<dbReference type="Proteomes" id="UP000006158">
    <property type="component" value="Chromosome"/>
</dbReference>
<dbReference type="GO" id="GO:0005737">
    <property type="term" value="C:cytoplasm"/>
    <property type="evidence" value="ECO:0007669"/>
    <property type="project" value="UniProtKB-SubCell"/>
</dbReference>
<dbReference type="GO" id="GO:0004365">
    <property type="term" value="F:glyceraldehyde-3-phosphate dehydrogenase (NAD+) (phosphorylating) activity"/>
    <property type="evidence" value="ECO:0000250"/>
    <property type="project" value="UniProtKB"/>
</dbReference>
<dbReference type="GO" id="GO:0051287">
    <property type="term" value="F:NAD binding"/>
    <property type="evidence" value="ECO:0000250"/>
    <property type="project" value="UniProtKB"/>
</dbReference>
<dbReference type="GO" id="GO:0050661">
    <property type="term" value="F:NADP binding"/>
    <property type="evidence" value="ECO:0007669"/>
    <property type="project" value="InterPro"/>
</dbReference>
<dbReference type="GO" id="GO:0006006">
    <property type="term" value="P:glucose metabolic process"/>
    <property type="evidence" value="ECO:0007669"/>
    <property type="project" value="InterPro"/>
</dbReference>
<dbReference type="GO" id="GO:0006096">
    <property type="term" value="P:glycolytic process"/>
    <property type="evidence" value="ECO:0007669"/>
    <property type="project" value="UniProtKB-UniPathway"/>
</dbReference>
<dbReference type="CDD" id="cd18126">
    <property type="entry name" value="GAPDH_I_C"/>
    <property type="match status" value="1"/>
</dbReference>
<dbReference type="CDD" id="cd05214">
    <property type="entry name" value="GAPDH_I_N"/>
    <property type="match status" value="1"/>
</dbReference>
<dbReference type="FunFam" id="3.30.360.10:FF:000002">
    <property type="entry name" value="Glyceraldehyde-3-phosphate dehydrogenase"/>
    <property type="match status" value="1"/>
</dbReference>
<dbReference type="FunFam" id="3.40.50.720:FF:000001">
    <property type="entry name" value="Glyceraldehyde-3-phosphate dehydrogenase"/>
    <property type="match status" value="1"/>
</dbReference>
<dbReference type="Gene3D" id="3.30.360.10">
    <property type="entry name" value="Dihydrodipicolinate Reductase, domain 2"/>
    <property type="match status" value="1"/>
</dbReference>
<dbReference type="Gene3D" id="3.40.50.720">
    <property type="entry name" value="NAD(P)-binding Rossmann-like Domain"/>
    <property type="match status" value="1"/>
</dbReference>
<dbReference type="InterPro" id="IPR020831">
    <property type="entry name" value="GlycerAld/Erythrose_P_DH"/>
</dbReference>
<dbReference type="InterPro" id="IPR020830">
    <property type="entry name" value="GlycerAld_3-P_DH_AS"/>
</dbReference>
<dbReference type="InterPro" id="IPR020829">
    <property type="entry name" value="GlycerAld_3-P_DH_cat"/>
</dbReference>
<dbReference type="InterPro" id="IPR020828">
    <property type="entry name" value="GlycerAld_3-P_DH_NAD(P)-bd"/>
</dbReference>
<dbReference type="InterPro" id="IPR006424">
    <property type="entry name" value="Glyceraldehyde-3-P_DH_1"/>
</dbReference>
<dbReference type="InterPro" id="IPR036291">
    <property type="entry name" value="NAD(P)-bd_dom_sf"/>
</dbReference>
<dbReference type="NCBIfam" id="TIGR01534">
    <property type="entry name" value="GAPDH-I"/>
    <property type="match status" value="1"/>
</dbReference>
<dbReference type="PANTHER" id="PTHR43148">
    <property type="entry name" value="GLYCERALDEHYDE-3-PHOSPHATE DEHYDROGENASE 2"/>
    <property type="match status" value="1"/>
</dbReference>
<dbReference type="Pfam" id="PF02800">
    <property type="entry name" value="Gp_dh_C"/>
    <property type="match status" value="1"/>
</dbReference>
<dbReference type="Pfam" id="PF00044">
    <property type="entry name" value="Gp_dh_N"/>
    <property type="match status" value="1"/>
</dbReference>
<dbReference type="PIRSF" id="PIRSF000149">
    <property type="entry name" value="GAP_DH"/>
    <property type="match status" value="1"/>
</dbReference>
<dbReference type="PRINTS" id="PR00078">
    <property type="entry name" value="G3PDHDRGNASE"/>
</dbReference>
<dbReference type="SMART" id="SM00846">
    <property type="entry name" value="Gp_dh_N"/>
    <property type="match status" value="1"/>
</dbReference>
<dbReference type="SUPFAM" id="SSF55347">
    <property type="entry name" value="Glyceraldehyde-3-phosphate dehydrogenase-like, C-terminal domain"/>
    <property type="match status" value="1"/>
</dbReference>
<dbReference type="SUPFAM" id="SSF51735">
    <property type="entry name" value="NAD(P)-binding Rossmann-fold domains"/>
    <property type="match status" value="1"/>
</dbReference>
<dbReference type="PROSITE" id="PS00071">
    <property type="entry name" value="GAPDH"/>
    <property type="match status" value="1"/>
</dbReference>
<keyword id="KW-0963">Cytoplasm</keyword>
<keyword id="KW-0324">Glycolysis</keyword>
<keyword id="KW-1017">Isopeptide bond</keyword>
<keyword id="KW-0520">NAD</keyword>
<keyword id="KW-0547">Nucleotide-binding</keyword>
<keyword id="KW-0560">Oxidoreductase</keyword>
<keyword id="KW-1185">Reference proteome</keyword>
<keyword id="KW-0832">Ubl conjugation</keyword>
<accession>A0QWW2</accession>
<accession>I7FD88</accession>
<gene>
    <name type="primary">gapA</name>
    <name type="synonym">gap</name>
    <name type="ordered locus">MSMEG_3084</name>
    <name type="ordered locus">MSMEI_3006</name>
</gene>
<protein>
    <recommendedName>
        <fullName evidence="3">Glyceraldehyde-3-phosphate dehydrogenase</fullName>
        <shortName evidence="3">GAPDH</shortName>
        <ecNumber evidence="3">1.2.1.12</ecNumber>
    </recommendedName>
    <alternativeName>
        <fullName evidence="3">NAD-dependent glyceraldehyde-3-phosphate dehydrogenase</fullName>
    </alternativeName>
</protein>
<feature type="chain" id="PRO_0000396820" description="Glyceraldehyde-3-phosphate dehydrogenase">
    <location>
        <begin position="1"/>
        <end position="340"/>
    </location>
</feature>
<feature type="active site" description="Nucleophile" evidence="1">
    <location>
        <position position="159"/>
    </location>
</feature>
<feature type="binding site" evidence="1">
    <location>
        <begin position="12"/>
        <end position="13"/>
    </location>
    <ligand>
        <name>NAD(+)</name>
        <dbReference type="ChEBI" id="CHEBI:57540"/>
    </ligand>
</feature>
<feature type="binding site" evidence="1">
    <location>
        <position position="40"/>
    </location>
    <ligand>
        <name>NAD(+)</name>
        <dbReference type="ChEBI" id="CHEBI:57540"/>
    </ligand>
</feature>
<feature type="binding site" evidence="1">
    <location>
        <position position="85"/>
    </location>
    <ligand>
        <name>NAD(+)</name>
        <dbReference type="ChEBI" id="CHEBI:57540"/>
    </ligand>
</feature>
<feature type="binding site" evidence="1">
    <location>
        <position position="128"/>
    </location>
    <ligand>
        <name>NAD(+)</name>
        <dbReference type="ChEBI" id="CHEBI:57540"/>
    </ligand>
</feature>
<feature type="binding site" evidence="1">
    <location>
        <begin position="158"/>
        <end position="160"/>
    </location>
    <ligand>
        <name>D-glyceraldehyde 3-phosphate</name>
        <dbReference type="ChEBI" id="CHEBI:59776"/>
    </ligand>
</feature>
<feature type="binding site" evidence="1">
    <location>
        <position position="189"/>
    </location>
    <ligand>
        <name>D-glyceraldehyde 3-phosphate</name>
        <dbReference type="ChEBI" id="CHEBI:59776"/>
    </ligand>
</feature>
<feature type="binding site" evidence="1">
    <location>
        <position position="204"/>
    </location>
    <ligand>
        <name>D-glyceraldehyde 3-phosphate</name>
        <dbReference type="ChEBI" id="CHEBI:59776"/>
    </ligand>
</feature>
<feature type="binding site" evidence="1">
    <location>
        <begin position="217"/>
        <end position="218"/>
    </location>
    <ligand>
        <name>D-glyceraldehyde 3-phosphate</name>
        <dbReference type="ChEBI" id="CHEBI:59776"/>
    </ligand>
</feature>
<feature type="binding site" evidence="1">
    <location>
        <position position="240"/>
    </location>
    <ligand>
        <name>D-glyceraldehyde 3-phosphate</name>
        <dbReference type="ChEBI" id="CHEBI:59776"/>
    </ligand>
</feature>
<feature type="binding site" evidence="1">
    <location>
        <position position="321"/>
    </location>
    <ligand>
        <name>NAD(+)</name>
        <dbReference type="ChEBI" id="CHEBI:57540"/>
    </ligand>
</feature>
<feature type="site" description="Activates thiol group during catalysis" evidence="1">
    <location>
        <position position="186"/>
    </location>
</feature>
<feature type="cross-link" description="Isoglutamyl lysine isopeptide (Lys-Gln) (interchain with Q-Cter in protein Pup)" evidence="4">
    <location>
        <position position="257"/>
    </location>
</feature>
<evidence type="ECO:0000250" key="1">
    <source>
        <dbReference type="UniProtKB" id="P00362"/>
    </source>
</evidence>
<evidence type="ECO:0000250" key="2">
    <source>
        <dbReference type="UniProtKB" id="P54226"/>
    </source>
</evidence>
<evidence type="ECO:0000250" key="3">
    <source>
        <dbReference type="UniProtKB" id="P9WN83"/>
    </source>
</evidence>
<evidence type="ECO:0000269" key="4">
    <source>
    </source>
</evidence>
<evidence type="ECO:0000305" key="5"/>
<organism>
    <name type="scientific">Mycolicibacterium smegmatis (strain ATCC 700084 / mc(2)155)</name>
    <name type="common">Mycobacterium smegmatis</name>
    <dbReference type="NCBI Taxonomy" id="246196"/>
    <lineage>
        <taxon>Bacteria</taxon>
        <taxon>Bacillati</taxon>
        <taxon>Actinomycetota</taxon>
        <taxon>Actinomycetes</taxon>
        <taxon>Mycobacteriales</taxon>
        <taxon>Mycobacteriaceae</taxon>
        <taxon>Mycolicibacterium</taxon>
    </lineage>
</organism>
<reference key="1">
    <citation type="submission" date="2006-10" db="EMBL/GenBank/DDBJ databases">
        <authorList>
            <person name="Fleischmann R.D."/>
            <person name="Dodson R.J."/>
            <person name="Haft D.H."/>
            <person name="Merkel J.S."/>
            <person name="Nelson W.C."/>
            <person name="Fraser C.M."/>
        </authorList>
    </citation>
    <scope>NUCLEOTIDE SEQUENCE [LARGE SCALE GENOMIC DNA]</scope>
    <source>
        <strain>ATCC 700084 / mc(2)155</strain>
    </source>
</reference>
<reference key="2">
    <citation type="journal article" date="2007" name="Genome Biol.">
        <title>Interrupted coding sequences in Mycobacterium smegmatis: authentic mutations or sequencing errors?</title>
        <authorList>
            <person name="Deshayes C."/>
            <person name="Perrodou E."/>
            <person name="Gallien S."/>
            <person name="Euphrasie D."/>
            <person name="Schaeffer C."/>
            <person name="Van-Dorsselaer A."/>
            <person name="Poch O."/>
            <person name="Lecompte O."/>
            <person name="Reyrat J.-M."/>
        </authorList>
    </citation>
    <scope>NUCLEOTIDE SEQUENCE [LARGE SCALE GENOMIC DNA]</scope>
    <source>
        <strain>ATCC 700084 / mc(2)155</strain>
    </source>
</reference>
<reference key="3">
    <citation type="journal article" date="2009" name="Genome Res.">
        <title>Ortho-proteogenomics: multiple proteomes investigation through orthology and a new MS-based protocol.</title>
        <authorList>
            <person name="Gallien S."/>
            <person name="Perrodou E."/>
            <person name="Carapito C."/>
            <person name="Deshayes C."/>
            <person name="Reyrat J.-M."/>
            <person name="Van Dorsselaer A."/>
            <person name="Poch O."/>
            <person name="Schaeffer C."/>
            <person name="Lecompte O."/>
        </authorList>
    </citation>
    <scope>NUCLEOTIDE SEQUENCE [LARGE SCALE GENOMIC DNA]</scope>
    <source>
        <strain>ATCC 700084 / mc(2)155</strain>
    </source>
</reference>
<reference key="4">
    <citation type="journal article" date="2010" name="Mol. Biosyst.">
        <title>Expansion of the mycobacterial 'PUPylome'.</title>
        <authorList>
            <person name="Watrous J."/>
            <person name="Burns K."/>
            <person name="Liu W.T."/>
            <person name="Patel A."/>
            <person name="Hook V."/>
            <person name="Bafna V."/>
            <person name="Barry C.E. III"/>
            <person name="Bark S."/>
            <person name="Dorrestein P.C."/>
        </authorList>
    </citation>
    <scope>PUPYLATION AT LYS-257</scope>
    <scope>IDENTIFICATION BY MASS SPECTROMETRY</scope>
</reference>
<sequence>MTIRVGVNGFGRIGRNFYRALATQKAEGKNTDIEIVAVNDLTDNATLAHLLKFDSILGRLPQDVSLEGDDTIVIGDTKIKALEVKEGPAALPWGDLGVDVVVESTGIFTNAAKAKGHLDAGAKKVIISAPATDEDITIVLGVNDDKYDGSQNIISNASCTTNCLGPLAKVLNDEFGIVKGLMTTIHAYTQDQNLQDGPHKDLRRARAAALNIVPTSTGAAKAIGLVLPELKGKLDGYALRVPIPTGSVTDLTAELAKSASVEDINAAMKAAAEGPLKGILKYYDAPIVSSDIVTDPHSSLYDAGLTKVIDNQAKVVSWYDNEWGYSNRLADLVALVGKSL</sequence>